<sequence length="363" mass="40249">MAKNRNLVFFLGVLASFTLSSFPVTVSGEPPILFTFGDSSYDVGNTKFFSSEFDPATTWPYGDSIDDPSGRWSDGHIVPDFVGRLIGHREPIPPVLDPKADLSRGASFAIAGAVVLGSQSTTASMNFGQQISKFLELHKQWTDKERAEAIYMVNIGAEDYLNFAKAHPNANTVEQLTQVAHVLQRIPRELTSLYRAGGARKFAVQNLGPLGCLPIVRQEFKTGENCMEMVNFMVKTHNERLSRLLVAITVPLLYRGFRYSLFDFNGEILRRINEPSLHGYTDTTTSCCGTGSRNAYGCGYSNVHAKLCSYQKSFLFFDGRHNTEKTDEEVANLFYSGDKHVVSPMNIKDLVGKAATDLLAQEI</sequence>
<reference key="1">
    <citation type="journal article" date="2000" name="DNA Res.">
        <title>Structural analysis of Arabidopsis thaliana chromosome 3. II. Sequence features of the 4,251,695 bp regions covered by 90 P1, TAC and BAC clones.</title>
        <authorList>
            <person name="Kaneko T."/>
            <person name="Katoh T."/>
            <person name="Sato S."/>
            <person name="Nakamura Y."/>
            <person name="Asamizu E."/>
            <person name="Tabata S."/>
        </authorList>
    </citation>
    <scope>NUCLEOTIDE SEQUENCE [LARGE SCALE GENOMIC DNA]</scope>
    <source>
        <strain>cv. Columbia</strain>
    </source>
</reference>
<reference key="2">
    <citation type="journal article" date="2017" name="Plant J.">
        <title>Araport11: a complete reannotation of the Arabidopsis thaliana reference genome.</title>
        <authorList>
            <person name="Cheng C.Y."/>
            <person name="Krishnakumar V."/>
            <person name="Chan A.P."/>
            <person name="Thibaud-Nissen F."/>
            <person name="Schobel S."/>
            <person name="Town C.D."/>
        </authorList>
    </citation>
    <scope>GENOME REANNOTATION</scope>
    <source>
        <strain>cv. Columbia</strain>
    </source>
</reference>
<reference key="3">
    <citation type="journal article" date="2003" name="Science">
        <title>Empirical analysis of transcriptional activity in the Arabidopsis genome.</title>
        <authorList>
            <person name="Yamada K."/>
            <person name="Lim J."/>
            <person name="Dale J.M."/>
            <person name="Chen H."/>
            <person name="Shinn P."/>
            <person name="Palm C.J."/>
            <person name="Southwick A.M."/>
            <person name="Wu H.C."/>
            <person name="Kim C.J."/>
            <person name="Nguyen M."/>
            <person name="Pham P.K."/>
            <person name="Cheuk R.F."/>
            <person name="Karlin-Newmann G."/>
            <person name="Liu S.X."/>
            <person name="Lam B."/>
            <person name="Sakano H."/>
            <person name="Wu T."/>
            <person name="Yu G."/>
            <person name="Miranda M."/>
            <person name="Quach H.L."/>
            <person name="Tripp M."/>
            <person name="Chang C.H."/>
            <person name="Lee J.M."/>
            <person name="Toriumi M.J."/>
            <person name="Chan M.M."/>
            <person name="Tang C.C."/>
            <person name="Onodera C.S."/>
            <person name="Deng J.M."/>
            <person name="Akiyama K."/>
            <person name="Ansari Y."/>
            <person name="Arakawa T."/>
            <person name="Banh J."/>
            <person name="Banno F."/>
            <person name="Bowser L."/>
            <person name="Brooks S.Y."/>
            <person name="Carninci P."/>
            <person name="Chao Q."/>
            <person name="Choy N."/>
            <person name="Enju A."/>
            <person name="Goldsmith A.D."/>
            <person name="Gurjal M."/>
            <person name="Hansen N.F."/>
            <person name="Hayashizaki Y."/>
            <person name="Johnson-Hopson C."/>
            <person name="Hsuan V.W."/>
            <person name="Iida K."/>
            <person name="Karnes M."/>
            <person name="Khan S."/>
            <person name="Koesema E."/>
            <person name="Ishida J."/>
            <person name="Jiang P.X."/>
            <person name="Jones T."/>
            <person name="Kawai J."/>
            <person name="Kamiya A."/>
            <person name="Meyers C."/>
            <person name="Nakajima M."/>
            <person name="Narusaka M."/>
            <person name="Seki M."/>
            <person name="Sakurai T."/>
            <person name="Satou M."/>
            <person name="Tamse R."/>
            <person name="Vaysberg M."/>
            <person name="Wallender E.K."/>
            <person name="Wong C."/>
            <person name="Yamamura Y."/>
            <person name="Yuan S."/>
            <person name="Shinozaki K."/>
            <person name="Davis R.W."/>
            <person name="Theologis A."/>
            <person name="Ecker J.R."/>
        </authorList>
    </citation>
    <scope>NUCLEOTIDE SEQUENCE [LARGE SCALE MRNA]</scope>
    <source>
        <strain>cv. Columbia</strain>
    </source>
</reference>
<reference key="4">
    <citation type="journal article" date="2004" name="Prog. Lipid Res.">
        <title>GDSL family of serine esterases/lipases.</title>
        <authorList>
            <person name="Akoh C.C."/>
            <person name="Lee G.-C."/>
            <person name="Liaw Y.-C."/>
            <person name="Huang T.-H."/>
            <person name="Shaw J.-F."/>
        </authorList>
    </citation>
    <scope>REVIEW</scope>
</reference>
<reference key="5">
    <citation type="journal article" date="2008" name="Pak. J. Biol. Sci.">
        <title>Sequence analysis of GDSL lipase gene family in Arabidopsis thaliana.</title>
        <authorList>
            <person name="Ling H."/>
        </authorList>
    </citation>
    <scope>GENE FAMILY</scope>
</reference>
<organism>
    <name type="scientific">Arabidopsis thaliana</name>
    <name type="common">Mouse-ear cress</name>
    <dbReference type="NCBI Taxonomy" id="3702"/>
    <lineage>
        <taxon>Eukaryota</taxon>
        <taxon>Viridiplantae</taxon>
        <taxon>Streptophyta</taxon>
        <taxon>Embryophyta</taxon>
        <taxon>Tracheophyta</taxon>
        <taxon>Spermatophyta</taxon>
        <taxon>Magnoliopsida</taxon>
        <taxon>eudicotyledons</taxon>
        <taxon>Gunneridae</taxon>
        <taxon>Pentapetalae</taxon>
        <taxon>rosids</taxon>
        <taxon>malvids</taxon>
        <taxon>Brassicales</taxon>
        <taxon>Brassicaceae</taxon>
        <taxon>Camelineae</taxon>
        <taxon>Arabidopsis</taxon>
    </lineage>
</organism>
<comment type="subcellular location">
    <subcellularLocation>
        <location evidence="3">Secreted</location>
    </subcellularLocation>
</comment>
<comment type="similarity">
    <text evidence="3">Belongs to the 'GDSL' lipolytic enzyme family.</text>
</comment>
<name>GDL51_ARATH</name>
<feature type="signal peptide" evidence="2">
    <location>
        <begin position="1"/>
        <end position="28"/>
    </location>
</feature>
<feature type="chain" id="PRO_0000367392" description="GDSL esterase/lipase At3g14220">
    <location>
        <begin position="29"/>
        <end position="363"/>
    </location>
</feature>
<feature type="active site" description="Nucleophile" evidence="1">
    <location>
        <position position="39"/>
    </location>
</feature>
<feature type="active site" evidence="1">
    <location>
        <position position="318"/>
    </location>
</feature>
<feature type="active site" evidence="1">
    <location>
        <position position="321"/>
    </location>
</feature>
<gene>
    <name type="ordered locus">At3g14220</name>
    <name type="ORF">MLE3.1</name>
</gene>
<dbReference type="EC" id="3.1.1.-"/>
<dbReference type="EMBL" id="AP000416">
    <property type="protein sequence ID" value="BAB01435.1"/>
    <property type="molecule type" value="Genomic_DNA"/>
</dbReference>
<dbReference type="EMBL" id="CP002686">
    <property type="protein sequence ID" value="AEE75488.1"/>
    <property type="molecule type" value="Genomic_DNA"/>
</dbReference>
<dbReference type="EMBL" id="BT004323">
    <property type="protein sequence ID" value="AAO42319.1"/>
    <property type="molecule type" value="mRNA"/>
</dbReference>
<dbReference type="EMBL" id="BT005625">
    <property type="protein sequence ID" value="AAO64045.1"/>
    <property type="molecule type" value="mRNA"/>
</dbReference>
<dbReference type="RefSeq" id="NP_188038.2">
    <property type="nucleotide sequence ID" value="NM_112279.4"/>
</dbReference>
<dbReference type="SMR" id="Q9LJP2"/>
<dbReference type="BioGRID" id="5974">
    <property type="interactions" value="1"/>
</dbReference>
<dbReference type="FunCoup" id="Q9LJP2">
    <property type="interactions" value="39"/>
</dbReference>
<dbReference type="IntAct" id="Q9LJP2">
    <property type="interactions" value="1"/>
</dbReference>
<dbReference type="STRING" id="3702.Q9LJP2"/>
<dbReference type="PaxDb" id="3702-AT3G14220.1"/>
<dbReference type="ProteomicsDB" id="224760"/>
<dbReference type="EnsemblPlants" id="AT3G14220.1">
    <property type="protein sequence ID" value="AT3G14220.1"/>
    <property type="gene ID" value="AT3G14220"/>
</dbReference>
<dbReference type="GeneID" id="820640"/>
<dbReference type="Gramene" id="AT3G14220.1">
    <property type="protein sequence ID" value="AT3G14220.1"/>
    <property type="gene ID" value="AT3G14220"/>
</dbReference>
<dbReference type="KEGG" id="ath:AT3G14220"/>
<dbReference type="Araport" id="AT3G14220"/>
<dbReference type="TAIR" id="AT3G14220"/>
<dbReference type="eggNOG" id="ENOG502S4IX">
    <property type="taxonomic scope" value="Eukaryota"/>
</dbReference>
<dbReference type="HOGENOM" id="CLU_015101_7_0_1"/>
<dbReference type="InParanoid" id="Q9LJP2"/>
<dbReference type="OMA" id="GQQISKF"/>
<dbReference type="PhylomeDB" id="Q9LJP2"/>
<dbReference type="PRO" id="PR:Q9LJP2"/>
<dbReference type="Proteomes" id="UP000006548">
    <property type="component" value="Chromosome 3"/>
</dbReference>
<dbReference type="ExpressionAtlas" id="Q9LJP2">
    <property type="expression patterns" value="baseline and differential"/>
</dbReference>
<dbReference type="GO" id="GO:0005576">
    <property type="term" value="C:extracellular region"/>
    <property type="evidence" value="ECO:0007669"/>
    <property type="project" value="UniProtKB-SubCell"/>
</dbReference>
<dbReference type="GO" id="GO:0000325">
    <property type="term" value="C:plant-type vacuole"/>
    <property type="evidence" value="ECO:0007005"/>
    <property type="project" value="TAIR"/>
</dbReference>
<dbReference type="GO" id="GO:0016788">
    <property type="term" value="F:hydrolase activity, acting on ester bonds"/>
    <property type="evidence" value="ECO:0007669"/>
    <property type="project" value="InterPro"/>
</dbReference>
<dbReference type="GO" id="GO:0016042">
    <property type="term" value="P:lipid catabolic process"/>
    <property type="evidence" value="ECO:0007669"/>
    <property type="project" value="UniProtKB-KW"/>
</dbReference>
<dbReference type="CDD" id="cd01837">
    <property type="entry name" value="SGNH_plant_lipase_like"/>
    <property type="match status" value="1"/>
</dbReference>
<dbReference type="FunFam" id="3.40.50.1110:FF:000026">
    <property type="entry name" value="GDSL esterase/lipase At3g14220"/>
    <property type="match status" value="1"/>
</dbReference>
<dbReference type="Gene3D" id="3.40.50.1110">
    <property type="entry name" value="SGNH hydrolase"/>
    <property type="match status" value="1"/>
</dbReference>
<dbReference type="InterPro" id="IPR001087">
    <property type="entry name" value="GDSL"/>
</dbReference>
<dbReference type="InterPro" id="IPR044552">
    <property type="entry name" value="GLIP1-5/GLL25"/>
</dbReference>
<dbReference type="InterPro" id="IPR036514">
    <property type="entry name" value="SGNH_hydro_sf"/>
</dbReference>
<dbReference type="InterPro" id="IPR035669">
    <property type="entry name" value="SGNH_plant_lipase-like"/>
</dbReference>
<dbReference type="PANTHER" id="PTHR45966">
    <property type="entry name" value="GDSL-LIKE LIPASE/ACYLHYDROLASE"/>
    <property type="match status" value="1"/>
</dbReference>
<dbReference type="PANTHER" id="PTHR45966:SF36">
    <property type="entry name" value="INACTIVE GDSL ESTERASE_LIPASE-LIKE PROTEIN 25"/>
    <property type="match status" value="1"/>
</dbReference>
<dbReference type="Pfam" id="PF00657">
    <property type="entry name" value="Lipase_GDSL"/>
    <property type="match status" value="1"/>
</dbReference>
<protein>
    <recommendedName>
        <fullName>GDSL esterase/lipase At3g14220</fullName>
        <ecNumber>3.1.1.-</ecNumber>
    </recommendedName>
    <alternativeName>
        <fullName>Extracellular lipase At3g14220</fullName>
    </alternativeName>
</protein>
<evidence type="ECO:0000250" key="1"/>
<evidence type="ECO:0000255" key="2"/>
<evidence type="ECO:0000305" key="3"/>
<accession>Q9LJP2</accession>
<keyword id="KW-0378">Hydrolase</keyword>
<keyword id="KW-0442">Lipid degradation</keyword>
<keyword id="KW-0443">Lipid metabolism</keyword>
<keyword id="KW-1185">Reference proteome</keyword>
<keyword id="KW-0964">Secreted</keyword>
<keyword id="KW-0732">Signal</keyword>
<proteinExistence type="evidence at transcript level"/>